<keyword id="KW-0165">Cleavage on pair of basic residues</keyword>
<keyword id="KW-0968">Cytoplasmic vesicle</keyword>
<keyword id="KW-0325">Glycoprotein</keyword>
<keyword id="KW-0472">Membrane</keyword>
<keyword id="KW-0597">Phosphoprotein</keyword>
<keyword id="KW-0654">Proteoglycan</keyword>
<keyword id="KW-1185">Reference proteome</keyword>
<keyword id="KW-0964">Secreted</keyword>
<keyword id="KW-0732">Signal</keyword>
<evidence type="ECO:0000250" key="1">
    <source>
        <dbReference type="UniProtKB" id="P47867"/>
    </source>
</evidence>
<evidence type="ECO:0000250" key="2">
    <source>
        <dbReference type="UniProtKB" id="Q8WXD2"/>
    </source>
</evidence>
<evidence type="ECO:0000255" key="3"/>
<evidence type="ECO:0000256" key="4">
    <source>
        <dbReference type="SAM" id="MobiDB-lite"/>
    </source>
</evidence>
<evidence type="ECO:0000269" key="5">
    <source>
    </source>
</evidence>
<evidence type="ECO:0000269" key="6">
    <source>
    </source>
</evidence>
<evidence type="ECO:0000269" key="7">
    <source>
    </source>
</evidence>
<evidence type="ECO:0007744" key="8">
    <source>
    </source>
</evidence>
<comment type="function">
    <text evidence="2 5 6">Member of the granin protein family that regulates the biogenesis of secretory granules (PubMed:12388744, PubMed:14597614). Acts as a sorting receptor for intragranular proteins including chromogranin A/CHGA (PubMed:12388744, PubMed:14597614). May also play a role in angiogenesis. Promotes endothelial proliferation, migration and tube formation through MEK/ERK signaling pathway (By similarity).</text>
</comment>
<comment type="subunit">
    <text evidence="1 2 5">Interacts with CHGA (PubMed:12388744). Interacts with secretogranin II/SCG2 (By similarity). Interacts (via C-terminus) with CPE (By similarity).</text>
</comment>
<comment type="subcellular location">
    <subcellularLocation>
        <location>Cytoplasmic vesicle</location>
        <location>Secretory vesicle</location>
    </subcellularLocation>
    <subcellularLocation>
        <location evidence="6">Cytoplasmic vesicle</location>
        <location evidence="6">Secretory vesicle membrane</location>
        <topology>Peripheral membrane protein</topology>
    </subcellularLocation>
    <subcellularLocation>
        <location>Secreted</location>
    </subcellularLocation>
    <text evidence="6">Associated with the secretory granule membrane through direct binding to cholesterol-enriched lipid rafts.</text>
</comment>
<comment type="tissue specificity">
    <text evidence="5 7">Expression restricted to the brain and pituitary gland. Not detected in the adrenal gland.</text>
</comment>
<sequence length="471" mass="53183">MGFLWTGSWILVLVLNSGPIQAFPKPEGSQDKSLHNRELSAERPLNEQIAEAEADKIKKTYPSESKPSESNFSSVDNLNLLKAITEKETVEKAKQSIRSSPFDNRLNVDDADSTKNRKLTDEYDSTKSGLDRKVQDDPDGLHQLDGTPLTAEDIVHKIATRIYEENDRGVFDKIVSKLLNLGLITESQAHTLEDEVAEALQKLISKEANNYEEAPEKPTSRTENQDGKIPEKVTPVAATQDGFTNRENDDTVSNTLTLSNGLERRTNPHRDDDFEELQYFPNFYALLTSIDSEKEAKEKETLITIMKTLIDFVKMMVKYGTISPEEGVSYLENLDETIALQTKNKLEKNTTDSKSKLFPAPPEKSHEETDSTKEEAAKMEKEYGSLKDSTKDDNSNLGGKTDEAKGKTEAYLEAIRKNIEWLKKHNKKGNKEDYDLSKMRDFINQQADAYVEKGILDKEEANAIKRIYSSL</sequence>
<name>SCG3_RAT</name>
<reference key="1">
    <citation type="journal article" date="1993" name="J. Mol. Neurosci.">
        <title>Primary structure of mouse secretogranin III and its absence from deficient mice.</title>
        <authorList>
            <person name="Dopazo A."/>
            <person name="Lovenberg T.W."/>
            <person name="Danielson P.E."/>
            <person name="Ottiger H.-P."/>
            <person name="Sutcliffe J.G."/>
        </authorList>
    </citation>
    <scope>NUCLEOTIDE SEQUENCE [MRNA]</scope>
</reference>
<reference key="2">
    <citation type="journal article" date="1990" name="J. Neurosci.">
        <title>1B1075: a brain- and pituitary-specific mRNA that encodes a novel chromograNIN / SECretogranin-like component of intracellular vesicles.</title>
        <authorList>
            <person name="Ottiger H.-P."/>
            <person name="Battenberg E.F."/>
            <person name="Tsou A.-P."/>
            <person name="Bloom F.E."/>
            <person name="Sutcliffe J.G."/>
        </authorList>
    </citation>
    <scope>PRELIMINARY NUCLEOTIDE SEQUENCE</scope>
    <scope>TISSUE SPECIFICITY</scope>
    <scope>SUBCELLULAR LOCATION</scope>
    <source>
        <tissue>Brain</tissue>
    </source>
</reference>
<reference key="3">
    <citation type="journal article" date="2002" name="Mol. Biol. Cell">
        <title>Identification of a chromogranin A domain that mediates binding to secretogranin III and targeting to secretory granules in pituitary cells and pancreatic beta-cells.</title>
        <authorList>
            <person name="Hosaka M."/>
            <person name="Watanabe T."/>
            <person name="Sakai Y."/>
            <person name="Uchiyama Y."/>
            <person name="Takeuchi T."/>
        </authorList>
    </citation>
    <scope>INTERACTION WITH CHGA</scope>
    <scope>SUBCELLULAR LOCATION</scope>
    <scope>TISSUE SPECIFICITY</scope>
    <scope>FUNCTION</scope>
</reference>
<reference key="4">
    <citation type="journal article" date="2004" name="J. Biol. Chem.">
        <title>Secretogranin III binds to cholesterol in the secretory granule membrane as an adapter for chromogranin A.</title>
        <authorList>
            <person name="Hosaka M."/>
            <person name="Suda M."/>
            <person name="Sakai Y."/>
            <person name="Izumi T."/>
            <person name="Watanabe T."/>
            <person name="Takeuchi T."/>
        </authorList>
    </citation>
    <scope>SUBCELLULAR LOCATION</scope>
    <scope>LIPID RAFT-BINDING</scope>
    <scope>FUNCTION</scope>
</reference>
<reference key="5">
    <citation type="journal article" date="2012" name="Nat. Commun.">
        <title>Quantitative maps of protein phosphorylation sites across 14 different rat organs and tissues.</title>
        <authorList>
            <person name="Lundby A."/>
            <person name="Secher A."/>
            <person name="Lage K."/>
            <person name="Nordsborg N.B."/>
            <person name="Dmytriyev A."/>
            <person name="Lundby C."/>
            <person name="Olsen J.V."/>
        </authorList>
    </citation>
    <scope>PHOSPHORYLATION [LARGE SCALE ANALYSIS] AT SER-40</scope>
    <scope>IDENTIFICATION BY MASS SPECTROMETRY [LARGE SCALE ANALYSIS]</scope>
</reference>
<accession>P47868</accession>
<dbReference type="EMBL" id="U02983">
    <property type="protein sequence ID" value="AAA56637.1"/>
    <property type="molecule type" value="mRNA"/>
</dbReference>
<dbReference type="RefSeq" id="NP_446308.1">
    <property type="nucleotide sequence ID" value="NM_053856.2"/>
</dbReference>
<dbReference type="SMR" id="P47868"/>
<dbReference type="FunCoup" id="P47868">
    <property type="interactions" value="839"/>
</dbReference>
<dbReference type="STRING" id="10116.ENSRNOP00000014491"/>
<dbReference type="GlyGen" id="P47868">
    <property type="glycosylation" value="1 site"/>
</dbReference>
<dbReference type="iPTMnet" id="P47868"/>
<dbReference type="PhosphoSitePlus" id="P47868"/>
<dbReference type="jPOST" id="P47868"/>
<dbReference type="PaxDb" id="10116-ENSRNOP00000014491"/>
<dbReference type="GeneID" id="116635"/>
<dbReference type="KEGG" id="rno:116635"/>
<dbReference type="UCSC" id="RGD:621209">
    <property type="organism name" value="rat"/>
</dbReference>
<dbReference type="AGR" id="RGD:621209"/>
<dbReference type="CTD" id="29106"/>
<dbReference type="RGD" id="621209">
    <property type="gene designation" value="Scg3"/>
</dbReference>
<dbReference type="eggNOG" id="ENOG502QUJH">
    <property type="taxonomic scope" value="Eukaryota"/>
</dbReference>
<dbReference type="InParanoid" id="P47868"/>
<dbReference type="OrthoDB" id="50151at9989"/>
<dbReference type="PhylomeDB" id="P47868"/>
<dbReference type="Reactome" id="R-RNO-114608">
    <property type="pathway name" value="Platelet degranulation"/>
</dbReference>
<dbReference type="Reactome" id="R-RNO-381426">
    <property type="pathway name" value="Regulation of Insulin-like Growth Factor (IGF) transport and uptake by Insulin-like Growth Factor Binding Proteins (IGFBPs)"/>
</dbReference>
<dbReference type="Reactome" id="R-RNO-8957275">
    <property type="pathway name" value="Post-translational protein phosphorylation"/>
</dbReference>
<dbReference type="PRO" id="PR:P47868"/>
<dbReference type="Proteomes" id="UP000002494">
    <property type="component" value="Unplaced"/>
</dbReference>
<dbReference type="GO" id="GO:0005576">
    <property type="term" value="C:extracellular region"/>
    <property type="evidence" value="ECO:0007669"/>
    <property type="project" value="UniProtKB-SubCell"/>
</dbReference>
<dbReference type="GO" id="GO:0030667">
    <property type="term" value="C:secretory granule membrane"/>
    <property type="evidence" value="ECO:0000266"/>
    <property type="project" value="RGD"/>
</dbReference>
<dbReference type="GO" id="GO:0030658">
    <property type="term" value="C:transport vesicle membrane"/>
    <property type="evidence" value="ECO:0007669"/>
    <property type="project" value="UniProtKB-SubCell"/>
</dbReference>
<dbReference type="GO" id="GO:0033366">
    <property type="term" value="P:protein localization to secretory granule"/>
    <property type="evidence" value="ECO:0000266"/>
    <property type="project" value="RGD"/>
</dbReference>
<dbReference type="InterPro" id="IPR026197">
    <property type="entry name" value="SCG3"/>
</dbReference>
<dbReference type="PANTHER" id="PTHR17388">
    <property type="entry name" value="SECRETOGRANIN III"/>
    <property type="match status" value="1"/>
</dbReference>
<dbReference type="PANTHER" id="PTHR17388:SF2">
    <property type="entry name" value="SECRETOGRANIN-3"/>
    <property type="match status" value="1"/>
</dbReference>
<dbReference type="Pfam" id="PF15467">
    <property type="entry name" value="SGIII"/>
    <property type="match status" value="1"/>
</dbReference>
<organism>
    <name type="scientific">Rattus norvegicus</name>
    <name type="common">Rat</name>
    <dbReference type="NCBI Taxonomy" id="10116"/>
    <lineage>
        <taxon>Eukaryota</taxon>
        <taxon>Metazoa</taxon>
        <taxon>Chordata</taxon>
        <taxon>Craniata</taxon>
        <taxon>Vertebrata</taxon>
        <taxon>Euteleostomi</taxon>
        <taxon>Mammalia</taxon>
        <taxon>Eutheria</taxon>
        <taxon>Euarchontoglires</taxon>
        <taxon>Glires</taxon>
        <taxon>Rodentia</taxon>
        <taxon>Myomorpha</taxon>
        <taxon>Muroidea</taxon>
        <taxon>Muridae</taxon>
        <taxon>Murinae</taxon>
        <taxon>Rattus</taxon>
    </lineage>
</organism>
<protein>
    <recommendedName>
        <fullName>Secretogranin-3</fullName>
    </recommendedName>
    <alternativeName>
        <fullName>1B1075</fullName>
    </alternativeName>
    <alternativeName>
        <fullName>Secretogranin III</fullName>
        <shortName>SgIII</shortName>
    </alternativeName>
</protein>
<proteinExistence type="evidence at protein level"/>
<feature type="signal peptide" evidence="3">
    <location>
        <begin position="1"/>
        <end position="22"/>
    </location>
</feature>
<feature type="chain" id="PRO_0000005463" description="Secretogranin-3">
    <location>
        <begin position="23"/>
        <end position="471"/>
    </location>
</feature>
<feature type="region of interest" description="Disordered" evidence="4">
    <location>
        <begin position="24"/>
        <end position="73"/>
    </location>
</feature>
<feature type="region of interest" description="Disordered" evidence="4">
    <location>
        <begin position="92"/>
        <end position="145"/>
    </location>
</feature>
<feature type="region of interest" description="Disordered" evidence="4">
    <location>
        <begin position="208"/>
        <end position="231"/>
    </location>
</feature>
<feature type="region of interest" description="Disordered" evidence="4">
    <location>
        <begin position="345"/>
        <end position="405"/>
    </location>
</feature>
<feature type="compositionally biased region" description="Basic and acidic residues" evidence="4">
    <location>
        <begin position="28"/>
        <end position="45"/>
    </location>
</feature>
<feature type="compositionally biased region" description="Low complexity" evidence="4">
    <location>
        <begin position="62"/>
        <end position="73"/>
    </location>
</feature>
<feature type="compositionally biased region" description="Basic and acidic residues" evidence="4">
    <location>
        <begin position="106"/>
        <end position="142"/>
    </location>
</feature>
<feature type="compositionally biased region" description="Basic and acidic residues" evidence="4">
    <location>
        <begin position="214"/>
        <end position="231"/>
    </location>
</feature>
<feature type="compositionally biased region" description="Basic and acidic residues" evidence="4">
    <location>
        <begin position="345"/>
        <end position="355"/>
    </location>
</feature>
<feature type="compositionally biased region" description="Basic and acidic residues" evidence="4">
    <location>
        <begin position="363"/>
        <end position="405"/>
    </location>
</feature>
<feature type="modified residue" description="Phosphoserine" evidence="8">
    <location>
        <position position="40"/>
    </location>
</feature>
<feature type="modified residue" description="Phosphoserine" evidence="1">
    <location>
        <position position="365"/>
    </location>
</feature>
<feature type="glycosylation site" description="O-linked (Xyl...) (chondroitin sulfate) serine" evidence="2">
    <location>
        <position position="40"/>
    </location>
</feature>
<gene>
    <name type="primary">Scg3</name>
</gene>